<dbReference type="EMBL" id="AM232698">
    <property type="protein sequence ID" value="CAJ81658.1"/>
    <property type="molecule type" value="mRNA"/>
</dbReference>
<dbReference type="PDB" id="2G9P">
    <property type="method" value="NMR"/>
    <property type="chains" value="A=59-84"/>
</dbReference>
<dbReference type="PDBsum" id="2G9P"/>
<dbReference type="SMR" id="Q1ELU1"/>
<dbReference type="ArachnoServer" id="AS000050">
    <property type="toxin name" value="M-zodatoxin-Lt2a"/>
</dbReference>
<dbReference type="EvolutionaryTrace" id="Q1ELU1"/>
<dbReference type="GO" id="GO:0005576">
    <property type="term" value="C:extracellular region"/>
    <property type="evidence" value="ECO:0007669"/>
    <property type="project" value="UniProtKB-SubCell"/>
</dbReference>
<dbReference type="GO" id="GO:0090729">
    <property type="term" value="F:toxin activity"/>
    <property type="evidence" value="ECO:0007669"/>
    <property type="project" value="UniProtKB-KW"/>
</dbReference>
<dbReference type="GO" id="GO:0042742">
    <property type="term" value="P:defense response to bacterium"/>
    <property type="evidence" value="ECO:0007669"/>
    <property type="project" value="UniProtKB-KW"/>
</dbReference>
<dbReference type="GO" id="GO:0050832">
    <property type="term" value="P:defense response to fungus"/>
    <property type="evidence" value="ECO:0007669"/>
    <property type="project" value="UniProtKB-KW"/>
</dbReference>
<dbReference type="GO" id="GO:0031640">
    <property type="term" value="P:killing of cells of another organism"/>
    <property type="evidence" value="ECO:0007669"/>
    <property type="project" value="UniProtKB-KW"/>
</dbReference>
<dbReference type="InterPro" id="IPR018802">
    <property type="entry name" value="Latarcin_precursor"/>
</dbReference>
<dbReference type="Pfam" id="PF10279">
    <property type="entry name" value="Latarcin"/>
    <property type="match status" value="1"/>
</dbReference>
<protein>
    <recommendedName>
        <fullName evidence="7">M-zodatoxin-Lt2a</fullName>
        <shortName evidence="7">M-ZDTX-Lt2a</shortName>
    </recommendedName>
    <alternativeName>
        <fullName evidence="5">Latarcin-2a</fullName>
        <shortName evidence="5">Ltc-2a</shortName>
        <shortName>Ltc2a</shortName>
    </alternativeName>
</protein>
<sequence>MKYFVIALALAVALVCIAESTAYEVNEELENELDDLDDAAWLAVAEELQGLEDFEESRGLFGKLIKKFGRKAISYAVKKARGKH</sequence>
<accession>Q1ELU1</accession>
<evidence type="ECO:0000255" key="1"/>
<evidence type="ECO:0000269" key="2">
    <source>
    </source>
</evidence>
<evidence type="ECO:0000269" key="3">
    <source>
    </source>
</evidence>
<evidence type="ECO:0000269" key="4">
    <source>
    </source>
</evidence>
<evidence type="ECO:0000303" key="5">
    <source>
    </source>
</evidence>
<evidence type="ECO:0000303" key="6">
    <source>
    </source>
</evidence>
<evidence type="ECO:0000305" key="7"/>
<evidence type="ECO:0000305" key="8">
    <source>
    </source>
</evidence>
<evidence type="ECO:0007829" key="9">
    <source>
        <dbReference type="PDB" id="2G9P"/>
    </source>
</evidence>
<proteinExistence type="evidence at protein level"/>
<organism>
    <name type="scientific">Lachesana tarabaevi</name>
    <name type="common">Spider</name>
    <dbReference type="NCBI Taxonomy" id="379576"/>
    <lineage>
        <taxon>Eukaryota</taxon>
        <taxon>Metazoa</taxon>
        <taxon>Ecdysozoa</taxon>
        <taxon>Arthropoda</taxon>
        <taxon>Chelicerata</taxon>
        <taxon>Arachnida</taxon>
        <taxon>Araneae</taxon>
        <taxon>Araneomorphae</taxon>
        <taxon>Entelegynae</taxon>
        <taxon>Entelegynae incertae sedis</taxon>
        <taxon>Zodariidae</taxon>
        <taxon>Lachesana</taxon>
    </lineage>
</organism>
<name>LAT2A_LACTA</name>
<reference key="1">
    <citation type="journal article" date="2006" name="J. Biol. Chem.">
        <title>Latarcins, antimicrobial and cytolytic peptides from the venom of the spider Lachesana tarabaevi (Zodariidae) that exemplify biomolecular diversity.</title>
        <authorList>
            <person name="Kozlov S.A."/>
            <person name="Vassilevski A.A."/>
            <person name="Feofanov A.V."/>
            <person name="Surovoy A.Y."/>
            <person name="Karpunin D.V."/>
            <person name="Grishin E.V."/>
        </authorList>
    </citation>
    <scope>NUCLEOTIDE SEQUENCE [MRNA]</scope>
    <scope>PROTEIN SEQUENCE OF 59-84</scope>
    <scope>SYNTHESIS OF 59-84</scope>
    <scope>FUNCTION</scope>
    <scope>SUBCELLULAR LOCATION</scope>
    <scope>MASS SPECTROMETRY</scope>
    <source>
        <tissue>Venom</tissue>
        <tissue>Venom gland</tissue>
    </source>
</reference>
<reference key="2">
    <citation type="journal article" date="2016" name="Biochem. J.">
        <title>Lachesana tarabaevi, an expert in membrane-active toxins.</title>
        <authorList>
            <person name="Kuzmenkov A.I."/>
            <person name="Sachkova M.Y."/>
            <person name="Kovalchuk S.I."/>
            <person name="Grishin E.V."/>
            <person name="Vassilevski A.A."/>
        </authorList>
    </citation>
    <scope>SUBCELLULAR LOCATION</scope>
    <scope>PQM MOTIF</scope>
    <scope>MASS SPECTROMETRY</scope>
    <source>
        <tissue>Venom</tissue>
    </source>
</reference>
<reference key="3">
    <citation type="journal article" date="2006" name="Biochemistry">
        <title>Spatial structure and activity mechanism of a novel spider antimicrobial peptide.</title>
        <authorList>
            <person name="Dubovskii P.V."/>
            <person name="Volynsky P.E."/>
            <person name="Polyansky A.A."/>
            <person name="Chupin V.V."/>
            <person name="Efremov R.G."/>
            <person name="Arseniev A.S."/>
        </authorList>
    </citation>
    <scope>STRUCTURE BY NMR OF 59-84</scope>
</reference>
<comment type="function">
    <text evidence="2">It has antimicrobial activity against Gram-positive bacteria (A.globiformis VKM Ac-1112 (MIC=0.7 uM), and B.subtilis VKM B-501 (MIC=0.4 uM)), Gram-negative bacteria (E.coli DH5-alpha (MIC=1.0 uM), E.coli MH1 (MIC=0.7 uM), and P.aeruginosa PAO1 (MIC=6.7 uM)), and yeasts (P.pastoris GS115 (MIC=6.7 uM), and S.cerevisiae Y190 (MIC=54 uM)). Also has a strong hemolytic activity against rabbit erythrocytes. Causes paralysis, but is not lethal when injected into insect (M.domestica) larvae.</text>
</comment>
<comment type="subcellular location">
    <subcellularLocation>
        <location evidence="2 4">Secreted</location>
    </subcellularLocation>
</comment>
<comment type="tissue specificity">
    <text evidence="8">Expressed by the venom gland.</text>
</comment>
<comment type="domain">
    <text evidence="3">The mature peptide (59-84) forms alpha-helices which probably disrupt target cell membranes.</text>
</comment>
<comment type="PTM">
    <text evidence="6">Cleavage of the propeptide depends on the processing quadruplet motif (XXXR, with at least one of X being E).</text>
</comment>
<comment type="mass spectrometry"/>
<comment type="mass spectrometry"/>
<comment type="similarity">
    <text evidence="7">Belongs to the cationic peptide 03 (latarcin) family. 02 subfamily.</text>
</comment>
<keyword id="KW-0002">3D-structure</keyword>
<keyword id="KW-0044">Antibiotic</keyword>
<keyword id="KW-0929">Antimicrobial</keyword>
<keyword id="KW-0204">Cytolysis</keyword>
<keyword id="KW-0903">Direct protein sequencing</keyword>
<keyword id="KW-0295">Fungicide</keyword>
<keyword id="KW-0354">Hemolysis</keyword>
<keyword id="KW-0964">Secreted</keyword>
<keyword id="KW-0732">Signal</keyword>
<keyword id="KW-0800">Toxin</keyword>
<feature type="signal peptide" evidence="1">
    <location>
        <begin position="1"/>
        <end position="22"/>
    </location>
</feature>
<feature type="propeptide" id="PRO_0000249736" evidence="1 2">
    <location>
        <begin position="23"/>
        <end position="58"/>
    </location>
</feature>
<feature type="peptide" id="PRO_0000249737" description="M-zodatoxin-Lt2a">
    <location>
        <begin position="59"/>
        <end position="84"/>
    </location>
</feature>
<feature type="short sequence motif" description="Processing quadruplet motif" evidence="6">
    <location>
        <begin position="55"/>
        <end position="58"/>
    </location>
</feature>
<feature type="helix" evidence="9">
    <location>
        <begin position="60"/>
        <end position="68"/>
    </location>
</feature>
<feature type="helix" evidence="9">
    <location>
        <begin position="71"/>
        <end position="79"/>
    </location>
</feature>